<keyword id="KW-0021">Allosteric enzyme</keyword>
<keyword id="KW-0067">ATP-binding</keyword>
<keyword id="KW-0963">Cytoplasm</keyword>
<keyword id="KW-0324">Glycolysis</keyword>
<keyword id="KW-0418">Kinase</keyword>
<keyword id="KW-0460">Magnesium</keyword>
<keyword id="KW-0479">Metal-binding</keyword>
<keyword id="KW-0547">Nucleotide-binding</keyword>
<keyword id="KW-0808">Transferase</keyword>
<comment type="function">
    <text evidence="1">Catalyzes the phosphorylation of D-fructose 6-phosphate to fructose 1,6-bisphosphate by ATP, the first committing step of glycolysis.</text>
</comment>
<comment type="catalytic activity">
    <reaction evidence="1">
        <text>beta-D-fructose 6-phosphate + ATP = beta-D-fructose 1,6-bisphosphate + ADP + H(+)</text>
        <dbReference type="Rhea" id="RHEA:16109"/>
        <dbReference type="ChEBI" id="CHEBI:15378"/>
        <dbReference type="ChEBI" id="CHEBI:30616"/>
        <dbReference type="ChEBI" id="CHEBI:32966"/>
        <dbReference type="ChEBI" id="CHEBI:57634"/>
        <dbReference type="ChEBI" id="CHEBI:456216"/>
        <dbReference type="EC" id="2.7.1.11"/>
    </reaction>
</comment>
<comment type="cofactor">
    <cofactor evidence="1">
        <name>Mg(2+)</name>
        <dbReference type="ChEBI" id="CHEBI:18420"/>
    </cofactor>
</comment>
<comment type="activity regulation">
    <text evidence="1">Allosterically activated by ADP and other diphosphonucleosides, and allosterically inhibited by phosphoenolpyruvate.</text>
</comment>
<comment type="pathway">
    <text evidence="1">Carbohydrate degradation; glycolysis; D-glyceraldehyde 3-phosphate and glycerone phosphate from D-glucose: step 3/4.</text>
</comment>
<comment type="subunit">
    <text evidence="1">Homotetramer.</text>
</comment>
<comment type="subcellular location">
    <subcellularLocation>
        <location evidence="1">Cytoplasm</location>
    </subcellularLocation>
</comment>
<comment type="similarity">
    <text evidence="1">Belongs to the phosphofructokinase type A (PFKA) family. ATP-dependent PFK group I subfamily. Prokaryotic clade 'B1' sub-subfamily.</text>
</comment>
<proteinExistence type="inferred from homology"/>
<protein>
    <recommendedName>
        <fullName evidence="1">ATP-dependent 6-phosphofructokinase</fullName>
        <shortName evidence="1">ATP-PFK</shortName>
        <shortName evidence="1">Phosphofructokinase</shortName>
        <ecNumber evidence="1">2.7.1.11</ecNumber>
    </recommendedName>
    <alternativeName>
        <fullName evidence="1">Phosphohexokinase</fullName>
    </alternativeName>
</protein>
<evidence type="ECO:0000255" key="1">
    <source>
        <dbReference type="HAMAP-Rule" id="MF_00339"/>
    </source>
</evidence>
<reference key="1">
    <citation type="submission" date="2008-04" db="EMBL/GenBank/DDBJ databases">
        <title>Complete sequence of Clostridium botulinum strain Eklund.</title>
        <authorList>
            <person name="Brinkac L.M."/>
            <person name="Brown J.L."/>
            <person name="Bruce D."/>
            <person name="Detter C."/>
            <person name="Munk C."/>
            <person name="Smith L.A."/>
            <person name="Smith T.J."/>
            <person name="Sutton G."/>
            <person name="Brettin T.S."/>
        </authorList>
    </citation>
    <scope>NUCLEOTIDE SEQUENCE [LARGE SCALE GENOMIC DNA]</scope>
    <source>
        <strain>Eklund 17B / Type B</strain>
    </source>
</reference>
<accession>B2TQR6</accession>
<organism>
    <name type="scientific">Clostridium botulinum (strain Eklund 17B / Type B)</name>
    <dbReference type="NCBI Taxonomy" id="935198"/>
    <lineage>
        <taxon>Bacteria</taxon>
        <taxon>Bacillati</taxon>
        <taxon>Bacillota</taxon>
        <taxon>Clostridia</taxon>
        <taxon>Eubacteriales</taxon>
        <taxon>Clostridiaceae</taxon>
        <taxon>Clostridium</taxon>
    </lineage>
</organism>
<name>PFKA_CLOBB</name>
<gene>
    <name evidence="1" type="primary">pfkA</name>
    <name type="ordered locus">CLL_A3337</name>
</gene>
<feature type="chain" id="PRO_1000120033" description="ATP-dependent 6-phosphofructokinase">
    <location>
        <begin position="1"/>
        <end position="320"/>
    </location>
</feature>
<feature type="active site" description="Proton acceptor" evidence="1">
    <location>
        <position position="127"/>
    </location>
</feature>
<feature type="binding site" evidence="1">
    <location>
        <position position="11"/>
    </location>
    <ligand>
        <name>ATP</name>
        <dbReference type="ChEBI" id="CHEBI:30616"/>
    </ligand>
</feature>
<feature type="binding site" evidence="1">
    <location>
        <begin position="21"/>
        <end position="25"/>
    </location>
    <ligand>
        <name>ADP</name>
        <dbReference type="ChEBI" id="CHEBI:456216"/>
        <note>allosteric activator; ligand shared between dimeric partners</note>
    </ligand>
</feature>
<feature type="binding site" evidence="1">
    <location>
        <begin position="72"/>
        <end position="73"/>
    </location>
    <ligand>
        <name>ATP</name>
        <dbReference type="ChEBI" id="CHEBI:30616"/>
    </ligand>
</feature>
<feature type="binding site" evidence="1">
    <location>
        <begin position="102"/>
        <end position="105"/>
    </location>
    <ligand>
        <name>ATP</name>
        <dbReference type="ChEBI" id="CHEBI:30616"/>
    </ligand>
</feature>
<feature type="binding site" evidence="1">
    <location>
        <position position="103"/>
    </location>
    <ligand>
        <name>Mg(2+)</name>
        <dbReference type="ChEBI" id="CHEBI:18420"/>
        <note>catalytic</note>
    </ligand>
</feature>
<feature type="binding site" description="in other chain" evidence="1">
    <location>
        <begin position="125"/>
        <end position="127"/>
    </location>
    <ligand>
        <name>substrate</name>
        <note>ligand shared between dimeric partners</note>
    </ligand>
</feature>
<feature type="binding site" description="in other chain" evidence="1">
    <location>
        <position position="154"/>
    </location>
    <ligand>
        <name>ADP</name>
        <dbReference type="ChEBI" id="CHEBI:456216"/>
        <note>allosteric activator; ligand shared between dimeric partners</note>
    </ligand>
</feature>
<feature type="binding site" evidence="1">
    <location>
        <position position="162"/>
    </location>
    <ligand>
        <name>substrate</name>
        <note>ligand shared between dimeric partners</note>
    </ligand>
</feature>
<feature type="binding site" description="in other chain" evidence="1">
    <location>
        <begin position="169"/>
        <end position="171"/>
    </location>
    <ligand>
        <name>substrate</name>
        <note>ligand shared between dimeric partners</note>
    </ligand>
</feature>
<feature type="binding site" description="in other chain" evidence="1">
    <location>
        <begin position="185"/>
        <end position="187"/>
    </location>
    <ligand>
        <name>ADP</name>
        <dbReference type="ChEBI" id="CHEBI:456216"/>
        <note>allosteric activator; ligand shared between dimeric partners</note>
    </ligand>
</feature>
<feature type="binding site" description="in other chain" evidence="1">
    <location>
        <begin position="214"/>
        <end position="216"/>
    </location>
    <ligand>
        <name>ADP</name>
        <dbReference type="ChEBI" id="CHEBI:456216"/>
        <note>allosteric activator; ligand shared between dimeric partners</note>
    </ligand>
</feature>
<feature type="binding site" description="in other chain" evidence="1">
    <location>
        <position position="223"/>
    </location>
    <ligand>
        <name>substrate</name>
        <note>ligand shared between dimeric partners</note>
    </ligand>
</feature>
<feature type="binding site" evidence="1">
    <location>
        <position position="244"/>
    </location>
    <ligand>
        <name>substrate</name>
        <note>ligand shared between dimeric partners</note>
    </ligand>
</feature>
<feature type="binding site" description="in other chain" evidence="1">
    <location>
        <begin position="250"/>
        <end position="253"/>
    </location>
    <ligand>
        <name>substrate</name>
        <note>ligand shared between dimeric partners</note>
    </ligand>
</feature>
<dbReference type="EC" id="2.7.1.11" evidence="1"/>
<dbReference type="EMBL" id="CP001056">
    <property type="protein sequence ID" value="ACD24269.1"/>
    <property type="molecule type" value="Genomic_DNA"/>
</dbReference>
<dbReference type="SMR" id="B2TQR6"/>
<dbReference type="KEGG" id="cbk:CLL_A3337"/>
<dbReference type="PATRIC" id="fig|935198.13.peg.3303"/>
<dbReference type="HOGENOM" id="CLU_020655_0_1_9"/>
<dbReference type="UniPathway" id="UPA00109">
    <property type="reaction ID" value="UER00182"/>
</dbReference>
<dbReference type="Proteomes" id="UP000001195">
    <property type="component" value="Chromosome"/>
</dbReference>
<dbReference type="GO" id="GO:0005945">
    <property type="term" value="C:6-phosphofructokinase complex"/>
    <property type="evidence" value="ECO:0007669"/>
    <property type="project" value="TreeGrafter"/>
</dbReference>
<dbReference type="GO" id="GO:0003872">
    <property type="term" value="F:6-phosphofructokinase activity"/>
    <property type="evidence" value="ECO:0007669"/>
    <property type="project" value="UniProtKB-UniRule"/>
</dbReference>
<dbReference type="GO" id="GO:0016208">
    <property type="term" value="F:AMP binding"/>
    <property type="evidence" value="ECO:0007669"/>
    <property type="project" value="TreeGrafter"/>
</dbReference>
<dbReference type="GO" id="GO:0005524">
    <property type="term" value="F:ATP binding"/>
    <property type="evidence" value="ECO:0007669"/>
    <property type="project" value="UniProtKB-KW"/>
</dbReference>
<dbReference type="GO" id="GO:0070095">
    <property type="term" value="F:fructose-6-phosphate binding"/>
    <property type="evidence" value="ECO:0007669"/>
    <property type="project" value="TreeGrafter"/>
</dbReference>
<dbReference type="GO" id="GO:0042802">
    <property type="term" value="F:identical protein binding"/>
    <property type="evidence" value="ECO:0007669"/>
    <property type="project" value="TreeGrafter"/>
</dbReference>
<dbReference type="GO" id="GO:0046872">
    <property type="term" value="F:metal ion binding"/>
    <property type="evidence" value="ECO:0007669"/>
    <property type="project" value="UniProtKB-KW"/>
</dbReference>
<dbReference type="GO" id="GO:0048029">
    <property type="term" value="F:monosaccharide binding"/>
    <property type="evidence" value="ECO:0007669"/>
    <property type="project" value="TreeGrafter"/>
</dbReference>
<dbReference type="GO" id="GO:0061621">
    <property type="term" value="P:canonical glycolysis"/>
    <property type="evidence" value="ECO:0007669"/>
    <property type="project" value="TreeGrafter"/>
</dbReference>
<dbReference type="GO" id="GO:0030388">
    <property type="term" value="P:fructose 1,6-bisphosphate metabolic process"/>
    <property type="evidence" value="ECO:0007669"/>
    <property type="project" value="TreeGrafter"/>
</dbReference>
<dbReference type="GO" id="GO:0006002">
    <property type="term" value="P:fructose 6-phosphate metabolic process"/>
    <property type="evidence" value="ECO:0007669"/>
    <property type="project" value="InterPro"/>
</dbReference>
<dbReference type="FunFam" id="3.40.50.450:FF:000001">
    <property type="entry name" value="ATP-dependent 6-phosphofructokinase"/>
    <property type="match status" value="1"/>
</dbReference>
<dbReference type="FunFam" id="3.40.50.460:FF:000002">
    <property type="entry name" value="ATP-dependent 6-phosphofructokinase"/>
    <property type="match status" value="1"/>
</dbReference>
<dbReference type="Gene3D" id="3.40.50.450">
    <property type="match status" value="1"/>
</dbReference>
<dbReference type="Gene3D" id="3.40.50.460">
    <property type="entry name" value="Phosphofructokinase domain"/>
    <property type="match status" value="1"/>
</dbReference>
<dbReference type="HAMAP" id="MF_00339">
    <property type="entry name" value="Phosphofructokinase_I_B1"/>
    <property type="match status" value="1"/>
</dbReference>
<dbReference type="InterPro" id="IPR022953">
    <property type="entry name" value="ATP_PFK"/>
</dbReference>
<dbReference type="InterPro" id="IPR012003">
    <property type="entry name" value="ATP_PFK_prok-type"/>
</dbReference>
<dbReference type="InterPro" id="IPR012828">
    <property type="entry name" value="PFKA_ATP_prok"/>
</dbReference>
<dbReference type="InterPro" id="IPR015912">
    <property type="entry name" value="Phosphofructokinase_CS"/>
</dbReference>
<dbReference type="InterPro" id="IPR000023">
    <property type="entry name" value="Phosphofructokinase_dom"/>
</dbReference>
<dbReference type="InterPro" id="IPR035966">
    <property type="entry name" value="PKF_sf"/>
</dbReference>
<dbReference type="NCBIfam" id="TIGR02482">
    <property type="entry name" value="PFKA_ATP"/>
    <property type="match status" value="1"/>
</dbReference>
<dbReference type="NCBIfam" id="NF002872">
    <property type="entry name" value="PRK03202.1"/>
    <property type="match status" value="1"/>
</dbReference>
<dbReference type="PANTHER" id="PTHR13697:SF4">
    <property type="entry name" value="ATP-DEPENDENT 6-PHOSPHOFRUCTOKINASE"/>
    <property type="match status" value="1"/>
</dbReference>
<dbReference type="PANTHER" id="PTHR13697">
    <property type="entry name" value="PHOSPHOFRUCTOKINASE"/>
    <property type="match status" value="1"/>
</dbReference>
<dbReference type="Pfam" id="PF00365">
    <property type="entry name" value="PFK"/>
    <property type="match status" value="1"/>
</dbReference>
<dbReference type="PIRSF" id="PIRSF000532">
    <property type="entry name" value="ATP_PFK_prok"/>
    <property type="match status" value="1"/>
</dbReference>
<dbReference type="PRINTS" id="PR00476">
    <property type="entry name" value="PHFRCTKINASE"/>
</dbReference>
<dbReference type="SUPFAM" id="SSF53784">
    <property type="entry name" value="Phosphofructokinase"/>
    <property type="match status" value="1"/>
</dbReference>
<dbReference type="PROSITE" id="PS00433">
    <property type="entry name" value="PHOSPHOFRUCTOKINASE"/>
    <property type="match status" value="1"/>
</dbReference>
<sequence>MKKIAILTSGGDAPGMNAAIRAVVRTAIDKGLEVMGVQRGYSGLLNGELFAMNRTSVSDIIQRGGTILRTARCPEFKDEEVRKRAVKILNAYGVDALVVIGGDGSFMGAKLLSKLGIKTIGLPGTIDNDLAYTDFTIGFDTALNTIVDAINKIRDTSTSHERVSIIEVMGRDCGDLALHAGISSGAEAIIVPEMGEFDRDALCRTILDGKNHGKTHSIVILAEGIGGAEELSKYVQELTGIEARATILGHIQRGGAPSASDRVLASRLGARAVEVLLQGETSRVIGIRDNQIVDQDIDEALAIESKFDLDLYNVAEVLSR</sequence>